<gene>
    <name type="primary">Bro</name>
    <name type="ORF">CG7960</name>
</gene>
<name>BRO_DROME</name>
<sequence>MHHHQNLGDAAAMNGMIPPYEAMAMYEQPKPRFIFKMPRVVPDQRSKFDSDELFRRLSRESEVRYTGYRERAMEERRMRFVNDCRKGYAEISMVASGTNLQLYFNANHNPYAQEQDCDFERERGKVHLRSSFIMNGVCVRFRGWVDLDRLDGAACLEFDEQRAQQEDAQLQEQIQSYNQRMAESRRIYHTPQTPPEDHHHRGGPGLPRGPMGW</sequence>
<proteinExistence type="evidence at protein level"/>
<organism>
    <name type="scientific">Drosophila melanogaster</name>
    <name type="common">Fruit fly</name>
    <dbReference type="NCBI Taxonomy" id="7227"/>
    <lineage>
        <taxon>Eukaryota</taxon>
        <taxon>Metazoa</taxon>
        <taxon>Ecdysozoa</taxon>
        <taxon>Arthropoda</taxon>
        <taxon>Hexapoda</taxon>
        <taxon>Insecta</taxon>
        <taxon>Pterygota</taxon>
        <taxon>Neoptera</taxon>
        <taxon>Endopterygota</taxon>
        <taxon>Diptera</taxon>
        <taxon>Brachycera</taxon>
        <taxon>Muscomorpha</taxon>
        <taxon>Ephydroidea</taxon>
        <taxon>Drosophilidae</taxon>
        <taxon>Drosophila</taxon>
        <taxon>Sophophora</taxon>
    </lineage>
</organism>
<evidence type="ECO:0000256" key="1">
    <source>
        <dbReference type="SAM" id="MobiDB-lite"/>
    </source>
</evidence>
<evidence type="ECO:0000305" key="2"/>
<accession>Q24039</accession>
<accession>Q9W0B5</accession>
<reference key="1">
    <citation type="journal article" date="1996" name="Mol. Cell. Biol.">
        <title>Drosophila homologs of the proto-oncogene product PEBP2/CBF beta regulate the DNA-binding properties of Runt.</title>
        <authorList>
            <person name="Golling G."/>
            <person name="Li L."/>
            <person name="Pepling M."/>
            <person name="Stebbins M."/>
            <person name="Gergen J.P."/>
        </authorList>
    </citation>
    <scope>NUCLEOTIDE SEQUENCE [MRNA]</scope>
</reference>
<reference key="2">
    <citation type="journal article" date="2000" name="Science">
        <title>The genome sequence of Drosophila melanogaster.</title>
        <authorList>
            <person name="Adams M.D."/>
            <person name="Celniker S.E."/>
            <person name="Holt R.A."/>
            <person name="Evans C.A."/>
            <person name="Gocayne J.D."/>
            <person name="Amanatides P.G."/>
            <person name="Scherer S.E."/>
            <person name="Li P.W."/>
            <person name="Hoskins R.A."/>
            <person name="Galle R.F."/>
            <person name="George R.A."/>
            <person name="Lewis S.E."/>
            <person name="Richards S."/>
            <person name="Ashburner M."/>
            <person name="Henderson S.N."/>
            <person name="Sutton G.G."/>
            <person name="Wortman J.R."/>
            <person name="Yandell M.D."/>
            <person name="Zhang Q."/>
            <person name="Chen L.X."/>
            <person name="Brandon R.C."/>
            <person name="Rogers Y.-H.C."/>
            <person name="Blazej R.G."/>
            <person name="Champe M."/>
            <person name="Pfeiffer B.D."/>
            <person name="Wan K.H."/>
            <person name="Doyle C."/>
            <person name="Baxter E.G."/>
            <person name="Helt G."/>
            <person name="Nelson C.R."/>
            <person name="Miklos G.L.G."/>
            <person name="Abril J.F."/>
            <person name="Agbayani A."/>
            <person name="An H.-J."/>
            <person name="Andrews-Pfannkoch C."/>
            <person name="Baldwin D."/>
            <person name="Ballew R.M."/>
            <person name="Basu A."/>
            <person name="Baxendale J."/>
            <person name="Bayraktaroglu L."/>
            <person name="Beasley E.M."/>
            <person name="Beeson K.Y."/>
            <person name="Benos P.V."/>
            <person name="Berman B.P."/>
            <person name="Bhandari D."/>
            <person name="Bolshakov S."/>
            <person name="Borkova D."/>
            <person name="Botchan M.R."/>
            <person name="Bouck J."/>
            <person name="Brokstein P."/>
            <person name="Brottier P."/>
            <person name="Burtis K.C."/>
            <person name="Busam D.A."/>
            <person name="Butler H."/>
            <person name="Cadieu E."/>
            <person name="Center A."/>
            <person name="Chandra I."/>
            <person name="Cherry J.M."/>
            <person name="Cawley S."/>
            <person name="Dahlke C."/>
            <person name="Davenport L.B."/>
            <person name="Davies P."/>
            <person name="de Pablos B."/>
            <person name="Delcher A."/>
            <person name="Deng Z."/>
            <person name="Mays A.D."/>
            <person name="Dew I."/>
            <person name="Dietz S.M."/>
            <person name="Dodson K."/>
            <person name="Doup L.E."/>
            <person name="Downes M."/>
            <person name="Dugan-Rocha S."/>
            <person name="Dunkov B.C."/>
            <person name="Dunn P."/>
            <person name="Durbin K.J."/>
            <person name="Evangelista C.C."/>
            <person name="Ferraz C."/>
            <person name="Ferriera S."/>
            <person name="Fleischmann W."/>
            <person name="Fosler C."/>
            <person name="Gabrielian A.E."/>
            <person name="Garg N.S."/>
            <person name="Gelbart W.M."/>
            <person name="Glasser K."/>
            <person name="Glodek A."/>
            <person name="Gong F."/>
            <person name="Gorrell J.H."/>
            <person name="Gu Z."/>
            <person name="Guan P."/>
            <person name="Harris M."/>
            <person name="Harris N.L."/>
            <person name="Harvey D.A."/>
            <person name="Heiman T.J."/>
            <person name="Hernandez J.R."/>
            <person name="Houck J."/>
            <person name="Hostin D."/>
            <person name="Houston K.A."/>
            <person name="Howland T.J."/>
            <person name="Wei M.-H."/>
            <person name="Ibegwam C."/>
            <person name="Jalali M."/>
            <person name="Kalush F."/>
            <person name="Karpen G.H."/>
            <person name="Ke Z."/>
            <person name="Kennison J.A."/>
            <person name="Ketchum K.A."/>
            <person name="Kimmel B.E."/>
            <person name="Kodira C.D."/>
            <person name="Kraft C.L."/>
            <person name="Kravitz S."/>
            <person name="Kulp D."/>
            <person name="Lai Z."/>
            <person name="Lasko P."/>
            <person name="Lei Y."/>
            <person name="Levitsky A.A."/>
            <person name="Li J.H."/>
            <person name="Li Z."/>
            <person name="Liang Y."/>
            <person name="Lin X."/>
            <person name="Liu X."/>
            <person name="Mattei B."/>
            <person name="McIntosh T.C."/>
            <person name="McLeod M.P."/>
            <person name="McPherson D."/>
            <person name="Merkulov G."/>
            <person name="Milshina N.V."/>
            <person name="Mobarry C."/>
            <person name="Morris J."/>
            <person name="Moshrefi A."/>
            <person name="Mount S.M."/>
            <person name="Moy M."/>
            <person name="Murphy B."/>
            <person name="Murphy L."/>
            <person name="Muzny D.M."/>
            <person name="Nelson D.L."/>
            <person name="Nelson D.R."/>
            <person name="Nelson K.A."/>
            <person name="Nixon K."/>
            <person name="Nusskern D.R."/>
            <person name="Pacleb J.M."/>
            <person name="Palazzolo M."/>
            <person name="Pittman G.S."/>
            <person name="Pan S."/>
            <person name="Pollard J."/>
            <person name="Puri V."/>
            <person name="Reese M.G."/>
            <person name="Reinert K."/>
            <person name="Remington K."/>
            <person name="Saunders R.D.C."/>
            <person name="Scheeler F."/>
            <person name="Shen H."/>
            <person name="Shue B.C."/>
            <person name="Siden-Kiamos I."/>
            <person name="Simpson M."/>
            <person name="Skupski M.P."/>
            <person name="Smith T.J."/>
            <person name="Spier E."/>
            <person name="Spradling A.C."/>
            <person name="Stapleton M."/>
            <person name="Strong R."/>
            <person name="Sun E."/>
            <person name="Svirskas R."/>
            <person name="Tector C."/>
            <person name="Turner R."/>
            <person name="Venter E."/>
            <person name="Wang A.H."/>
            <person name="Wang X."/>
            <person name="Wang Z.-Y."/>
            <person name="Wassarman D.A."/>
            <person name="Weinstock G.M."/>
            <person name="Weissenbach J."/>
            <person name="Williams S.M."/>
            <person name="Woodage T."/>
            <person name="Worley K.C."/>
            <person name="Wu D."/>
            <person name="Yang S."/>
            <person name="Yao Q.A."/>
            <person name="Ye J."/>
            <person name="Yeh R.-F."/>
            <person name="Zaveri J.S."/>
            <person name="Zhan M."/>
            <person name="Zhang G."/>
            <person name="Zhao Q."/>
            <person name="Zheng L."/>
            <person name="Zheng X.H."/>
            <person name="Zhong F.N."/>
            <person name="Zhong W."/>
            <person name="Zhou X."/>
            <person name="Zhu S.C."/>
            <person name="Zhu X."/>
            <person name="Smith H.O."/>
            <person name="Gibbs R.A."/>
            <person name="Myers E.W."/>
            <person name="Rubin G.M."/>
            <person name="Venter J.C."/>
        </authorList>
    </citation>
    <scope>NUCLEOTIDE SEQUENCE [LARGE SCALE GENOMIC DNA]</scope>
    <source>
        <strain>Berkeley</strain>
    </source>
</reference>
<reference key="3">
    <citation type="journal article" date="2002" name="Genome Biol.">
        <title>Annotation of the Drosophila melanogaster euchromatic genome: a systematic review.</title>
        <authorList>
            <person name="Misra S."/>
            <person name="Crosby M.A."/>
            <person name="Mungall C.J."/>
            <person name="Matthews B.B."/>
            <person name="Campbell K.S."/>
            <person name="Hradecky P."/>
            <person name="Huang Y."/>
            <person name="Kaminker J.S."/>
            <person name="Millburn G.H."/>
            <person name="Prochnik S.E."/>
            <person name="Smith C.D."/>
            <person name="Tupy J.L."/>
            <person name="Whitfield E.J."/>
            <person name="Bayraktaroglu L."/>
            <person name="Berman B.P."/>
            <person name="Bettencourt B.R."/>
            <person name="Celniker S.E."/>
            <person name="de Grey A.D.N.J."/>
            <person name="Drysdale R.A."/>
            <person name="Harris N.L."/>
            <person name="Richter J."/>
            <person name="Russo S."/>
            <person name="Schroeder A.J."/>
            <person name="Shu S.Q."/>
            <person name="Stapleton M."/>
            <person name="Yamada C."/>
            <person name="Ashburner M."/>
            <person name="Gelbart W.M."/>
            <person name="Rubin G.M."/>
            <person name="Lewis S.E."/>
        </authorList>
    </citation>
    <scope>GENOME REANNOTATION</scope>
    <source>
        <strain>Berkeley</strain>
    </source>
</reference>
<feature type="chain" id="PRO_0000064990" description="Protein brother">
    <location>
        <begin position="1"/>
        <end position="213"/>
    </location>
</feature>
<feature type="region of interest" description="Disordered" evidence="1">
    <location>
        <begin position="189"/>
        <end position="213"/>
    </location>
</feature>
<feature type="compositionally biased region" description="Gly residues" evidence="1">
    <location>
        <begin position="203"/>
        <end position="213"/>
    </location>
</feature>
<feature type="sequence conflict" description="In Ref. 1." evidence="2" ref="1">
    <original>A</original>
    <variation>AVA</variation>
    <location>
        <position position="10"/>
    </location>
</feature>
<feature type="sequence conflict" description="In Ref. 1." evidence="2" ref="1">
    <original>M</original>
    <variation>L</variation>
    <location>
        <position position="13"/>
    </location>
</feature>
<feature type="sequence conflict" description="In Ref. 1; AAB03675." evidence="2" ref="1">
    <original>E</original>
    <variation>D</variation>
    <location>
        <position position="157"/>
    </location>
</feature>
<feature type="sequence conflict" description="In Ref. 1; AAB03675." evidence="2" ref="1">
    <original>G</original>
    <variation>S</variation>
    <location>
        <position position="205"/>
    </location>
</feature>
<dbReference type="EMBL" id="U22176">
    <property type="protein sequence ID" value="AAB03675.1"/>
    <property type="status" value="ALT_INIT"/>
    <property type="molecule type" value="mRNA"/>
</dbReference>
<dbReference type="EMBL" id="AE014296">
    <property type="protein sequence ID" value="AAF47538.3"/>
    <property type="molecule type" value="Genomic_DNA"/>
</dbReference>
<dbReference type="RefSeq" id="NP_477066.2">
    <property type="nucleotide sequence ID" value="NM_057718.3"/>
</dbReference>
<dbReference type="SMR" id="Q24039"/>
<dbReference type="BioGRID" id="63736">
    <property type="interactions" value="14"/>
</dbReference>
<dbReference type="FunCoup" id="Q24039">
    <property type="interactions" value="1271"/>
</dbReference>
<dbReference type="IntAct" id="Q24039">
    <property type="interactions" value="11"/>
</dbReference>
<dbReference type="STRING" id="7227.FBpp0072643"/>
<dbReference type="PaxDb" id="7227-FBpp0072643"/>
<dbReference type="DNASU" id="38202"/>
<dbReference type="EnsemblMetazoa" id="FBtr0072760">
    <property type="protein sequence ID" value="FBpp0072643"/>
    <property type="gene ID" value="FBgn0013755"/>
</dbReference>
<dbReference type="GeneID" id="38202"/>
<dbReference type="KEGG" id="dme:Dmel_CG7960"/>
<dbReference type="AGR" id="FB:FBgn0013755"/>
<dbReference type="CTD" id="38202"/>
<dbReference type="FlyBase" id="FBgn0013755">
    <property type="gene designation" value="Bro"/>
</dbReference>
<dbReference type="VEuPathDB" id="VectorBase:FBgn0013755"/>
<dbReference type="eggNOG" id="KOG4785">
    <property type="taxonomic scope" value="Eukaryota"/>
</dbReference>
<dbReference type="HOGENOM" id="CLU_074992_0_1_1"/>
<dbReference type="InParanoid" id="Q24039"/>
<dbReference type="OMA" id="YAEISMV"/>
<dbReference type="OrthoDB" id="10026505at2759"/>
<dbReference type="PhylomeDB" id="Q24039"/>
<dbReference type="SignaLink" id="Q24039"/>
<dbReference type="BioGRID-ORCS" id="38202">
    <property type="hits" value="0 hits in 1 CRISPR screen"/>
</dbReference>
<dbReference type="GenomeRNAi" id="38202"/>
<dbReference type="PRO" id="PR:Q24039"/>
<dbReference type="Proteomes" id="UP000000803">
    <property type="component" value="Chromosome 3L"/>
</dbReference>
<dbReference type="Bgee" id="FBgn0013755">
    <property type="expression patterns" value="Expressed in cleaving embryo and 5 other cell types or tissues"/>
</dbReference>
<dbReference type="ExpressionAtlas" id="Q24039">
    <property type="expression patterns" value="baseline and differential"/>
</dbReference>
<dbReference type="GO" id="GO:0016513">
    <property type="term" value="C:core-binding factor complex"/>
    <property type="evidence" value="ECO:0000318"/>
    <property type="project" value="GO_Central"/>
</dbReference>
<dbReference type="GO" id="GO:0005634">
    <property type="term" value="C:nucleus"/>
    <property type="evidence" value="ECO:0000314"/>
    <property type="project" value="FlyBase"/>
</dbReference>
<dbReference type="GO" id="GO:0003713">
    <property type="term" value="F:transcription coactivator activity"/>
    <property type="evidence" value="ECO:0000314"/>
    <property type="project" value="FlyBase"/>
</dbReference>
<dbReference type="GO" id="GO:0048749">
    <property type="term" value="P:compound eye development"/>
    <property type="evidence" value="ECO:0000304"/>
    <property type="project" value="FlyBase"/>
</dbReference>
<dbReference type="GO" id="GO:0035206">
    <property type="term" value="P:regulation of hemocyte proliferation"/>
    <property type="evidence" value="ECO:0000315"/>
    <property type="project" value="FlyBase"/>
</dbReference>
<dbReference type="GO" id="GO:0006357">
    <property type="term" value="P:regulation of transcription by RNA polymerase II"/>
    <property type="evidence" value="ECO:0000318"/>
    <property type="project" value="GO_Central"/>
</dbReference>
<dbReference type="FunFam" id="2.40.250.10:FF:000001">
    <property type="entry name" value="Core-binding factor subunit beta"/>
    <property type="match status" value="1"/>
</dbReference>
<dbReference type="Gene3D" id="2.40.250.10">
    <property type="entry name" value="Core binding factor, beta subunit"/>
    <property type="match status" value="1"/>
</dbReference>
<dbReference type="InterPro" id="IPR003417">
    <property type="entry name" value="CBF_beta"/>
</dbReference>
<dbReference type="InterPro" id="IPR036552">
    <property type="entry name" value="CBF_bsu_sf"/>
</dbReference>
<dbReference type="PANTHER" id="PTHR10276:SF3">
    <property type="entry name" value="CORE-BINDING FACTOR SUBUNIT BETA"/>
    <property type="match status" value="1"/>
</dbReference>
<dbReference type="PANTHER" id="PTHR10276">
    <property type="entry name" value="CORE-BINDING FACTOR, BETA SUBUNIT"/>
    <property type="match status" value="1"/>
</dbReference>
<dbReference type="Pfam" id="PF02312">
    <property type="entry name" value="CBF_beta"/>
    <property type="match status" value="1"/>
</dbReference>
<dbReference type="SUPFAM" id="SSF50723">
    <property type="entry name" value="Core binding factor beta, CBF"/>
    <property type="match status" value="1"/>
</dbReference>
<keyword id="KW-0539">Nucleus</keyword>
<keyword id="KW-1185">Reference proteome</keyword>
<protein>
    <recommendedName>
        <fullName>Protein brother</fullName>
    </recommendedName>
</protein>
<comment type="function">
    <text>Regulates the DNA-binding properties of Runt.</text>
</comment>
<comment type="interaction">
    <interactant intactId="EBI-148540">
        <id>Q24039</id>
    </interactant>
    <interactant intactId="EBI-868309">
        <id>P22814</id>
        <label>run</label>
    </interactant>
    <organismsDiffer>false</organismsDiffer>
    <experiments>6</experiments>
</comment>
<comment type="subcellular location">
    <subcellularLocation>
        <location evidence="2">Nucleus</location>
    </subcellularLocation>
</comment>
<comment type="similarity">
    <text evidence="2">Belongs to the CBF-beta family.</text>
</comment>
<comment type="sequence caution" evidence="2">
    <conflict type="erroneous initiation">
        <sequence resource="EMBL-CDS" id="AAB03675"/>
    </conflict>
</comment>